<evidence type="ECO:0000255" key="1">
    <source>
        <dbReference type="HAMAP-Rule" id="MF_01661"/>
    </source>
</evidence>
<name>RBSD_THEPX</name>
<reference key="1">
    <citation type="submission" date="2008-01" db="EMBL/GenBank/DDBJ databases">
        <title>Complete sequence of Thermoanaerobacter sp. X514.</title>
        <authorList>
            <consortium name="US DOE Joint Genome Institute"/>
            <person name="Copeland A."/>
            <person name="Lucas S."/>
            <person name="Lapidus A."/>
            <person name="Barry K."/>
            <person name="Glavina del Rio T."/>
            <person name="Dalin E."/>
            <person name="Tice H."/>
            <person name="Pitluck S."/>
            <person name="Bruce D."/>
            <person name="Goodwin L."/>
            <person name="Saunders E."/>
            <person name="Brettin T."/>
            <person name="Detter J.C."/>
            <person name="Han C."/>
            <person name="Schmutz J."/>
            <person name="Larimer F."/>
            <person name="Land M."/>
            <person name="Hauser L."/>
            <person name="Kyrpides N."/>
            <person name="Kim E."/>
            <person name="Hemme C."/>
            <person name="Fields M.W."/>
            <person name="He Z."/>
            <person name="Zhou J."/>
            <person name="Richardson P."/>
        </authorList>
    </citation>
    <scope>NUCLEOTIDE SEQUENCE [LARGE SCALE GENOMIC DNA]</scope>
    <source>
        <strain>X514</strain>
    </source>
</reference>
<dbReference type="EC" id="5.4.99.62" evidence="1"/>
<dbReference type="EMBL" id="CP000923">
    <property type="protein sequence ID" value="ABY91482.1"/>
    <property type="molecule type" value="Genomic_DNA"/>
</dbReference>
<dbReference type="RefSeq" id="WP_009051946.1">
    <property type="nucleotide sequence ID" value="NC_010320.1"/>
</dbReference>
<dbReference type="SMR" id="B0K1M3"/>
<dbReference type="KEGG" id="tex:Teth514_0163"/>
<dbReference type="HOGENOM" id="CLU_135498_0_0_9"/>
<dbReference type="UniPathway" id="UPA00916">
    <property type="reaction ID" value="UER00888"/>
</dbReference>
<dbReference type="Proteomes" id="UP000002155">
    <property type="component" value="Chromosome"/>
</dbReference>
<dbReference type="GO" id="GO:0005829">
    <property type="term" value="C:cytosol"/>
    <property type="evidence" value="ECO:0007669"/>
    <property type="project" value="TreeGrafter"/>
</dbReference>
<dbReference type="GO" id="GO:0062193">
    <property type="term" value="F:D-ribose pyranase activity"/>
    <property type="evidence" value="ECO:0007669"/>
    <property type="project" value="UniProtKB-EC"/>
</dbReference>
<dbReference type="GO" id="GO:0016872">
    <property type="term" value="F:intramolecular lyase activity"/>
    <property type="evidence" value="ECO:0007669"/>
    <property type="project" value="UniProtKB-UniRule"/>
</dbReference>
<dbReference type="GO" id="GO:0048029">
    <property type="term" value="F:monosaccharide binding"/>
    <property type="evidence" value="ECO:0007669"/>
    <property type="project" value="InterPro"/>
</dbReference>
<dbReference type="GO" id="GO:0019303">
    <property type="term" value="P:D-ribose catabolic process"/>
    <property type="evidence" value="ECO:0007669"/>
    <property type="project" value="UniProtKB-UniRule"/>
</dbReference>
<dbReference type="Gene3D" id="3.40.1650.10">
    <property type="entry name" value="RbsD-like domain"/>
    <property type="match status" value="1"/>
</dbReference>
<dbReference type="HAMAP" id="MF_01661">
    <property type="entry name" value="D_rib_pyranase"/>
    <property type="match status" value="1"/>
</dbReference>
<dbReference type="InterPro" id="IPR023064">
    <property type="entry name" value="D-ribose_pyranase"/>
</dbReference>
<dbReference type="InterPro" id="IPR023750">
    <property type="entry name" value="RbsD-like_sf"/>
</dbReference>
<dbReference type="InterPro" id="IPR007721">
    <property type="entry name" value="RbsD_FucU"/>
</dbReference>
<dbReference type="NCBIfam" id="NF008761">
    <property type="entry name" value="PRK11797.1"/>
    <property type="match status" value="1"/>
</dbReference>
<dbReference type="PANTHER" id="PTHR37831">
    <property type="entry name" value="D-RIBOSE PYRANASE"/>
    <property type="match status" value="1"/>
</dbReference>
<dbReference type="PANTHER" id="PTHR37831:SF1">
    <property type="entry name" value="D-RIBOSE PYRANASE"/>
    <property type="match status" value="1"/>
</dbReference>
<dbReference type="Pfam" id="PF05025">
    <property type="entry name" value="RbsD_FucU"/>
    <property type="match status" value="1"/>
</dbReference>
<dbReference type="SUPFAM" id="SSF102546">
    <property type="entry name" value="RbsD-like"/>
    <property type="match status" value="1"/>
</dbReference>
<gene>
    <name evidence="1" type="primary">rbsD</name>
    <name type="ordered locus">Teth514_0163</name>
</gene>
<sequence length="130" mass="14525">MKKTYLLNSEISEVVARLGHTDLLVIADSGLPIPDGVKRIDIALTKGIPSFKDTLNTVLTELGVEKAYIAKEMIDKNNDLYLYLLELFGEKLIIISHEDLKAMSKNARAIIRTGEYKPYANIILESGVEF</sequence>
<accession>B0K1M3</accession>
<keyword id="KW-0119">Carbohydrate metabolism</keyword>
<keyword id="KW-0963">Cytoplasm</keyword>
<keyword id="KW-0413">Isomerase</keyword>
<organism>
    <name type="scientific">Thermoanaerobacter sp. (strain X514)</name>
    <dbReference type="NCBI Taxonomy" id="399726"/>
    <lineage>
        <taxon>Bacteria</taxon>
        <taxon>Bacillati</taxon>
        <taxon>Bacillota</taxon>
        <taxon>Clostridia</taxon>
        <taxon>Thermoanaerobacterales</taxon>
        <taxon>Thermoanaerobacteraceae</taxon>
        <taxon>Thermoanaerobacter</taxon>
    </lineage>
</organism>
<comment type="function">
    <text evidence="1">Catalyzes the interconversion of beta-pyran and beta-furan forms of D-ribose.</text>
</comment>
<comment type="catalytic activity">
    <reaction evidence="1">
        <text>beta-D-ribopyranose = beta-D-ribofuranose</text>
        <dbReference type="Rhea" id="RHEA:25432"/>
        <dbReference type="ChEBI" id="CHEBI:27476"/>
        <dbReference type="ChEBI" id="CHEBI:47002"/>
        <dbReference type="EC" id="5.4.99.62"/>
    </reaction>
</comment>
<comment type="pathway">
    <text evidence="1">Carbohydrate metabolism; D-ribose degradation; D-ribose 5-phosphate from beta-D-ribopyranose: step 1/2.</text>
</comment>
<comment type="subunit">
    <text evidence="1">Homodecamer.</text>
</comment>
<comment type="subcellular location">
    <subcellularLocation>
        <location evidence="1">Cytoplasm</location>
    </subcellularLocation>
</comment>
<comment type="similarity">
    <text evidence="1">Belongs to the RbsD / FucU family. RbsD subfamily.</text>
</comment>
<feature type="chain" id="PRO_0000346288" description="D-ribose pyranase">
    <location>
        <begin position="1"/>
        <end position="130"/>
    </location>
</feature>
<feature type="active site" description="Proton donor" evidence="1">
    <location>
        <position position="20"/>
    </location>
</feature>
<feature type="binding site" evidence="1">
    <location>
        <position position="28"/>
    </location>
    <ligand>
        <name>substrate</name>
    </ligand>
</feature>
<feature type="binding site" evidence="1">
    <location>
        <position position="97"/>
    </location>
    <ligand>
        <name>substrate</name>
    </ligand>
</feature>
<feature type="binding site" evidence="1">
    <location>
        <begin position="119"/>
        <end position="121"/>
    </location>
    <ligand>
        <name>substrate</name>
    </ligand>
</feature>
<protein>
    <recommendedName>
        <fullName evidence="1">D-ribose pyranase</fullName>
        <ecNumber evidence="1">5.4.99.62</ecNumber>
    </recommendedName>
</protein>
<proteinExistence type="inferred from homology"/>